<protein>
    <recommendedName>
        <fullName evidence="1">Elongation factor P</fullName>
        <shortName evidence="1">EF-P</shortName>
    </recommendedName>
</protein>
<feature type="chain" id="PRO_1000010696" description="Elongation factor P">
    <location>
        <begin position="1"/>
        <end position="185"/>
    </location>
</feature>
<organism>
    <name type="scientific">Burkholderia ambifaria (strain ATCC BAA-244 / DSM 16087 / CCUG 44356 / LMG 19182 / AMMD)</name>
    <name type="common">Burkholderia cepacia (strain AMMD)</name>
    <dbReference type="NCBI Taxonomy" id="339670"/>
    <lineage>
        <taxon>Bacteria</taxon>
        <taxon>Pseudomonadati</taxon>
        <taxon>Pseudomonadota</taxon>
        <taxon>Betaproteobacteria</taxon>
        <taxon>Burkholderiales</taxon>
        <taxon>Burkholderiaceae</taxon>
        <taxon>Burkholderia</taxon>
        <taxon>Burkholderia cepacia complex</taxon>
    </lineage>
</organism>
<keyword id="KW-0963">Cytoplasm</keyword>
<keyword id="KW-0251">Elongation factor</keyword>
<keyword id="KW-0648">Protein biosynthesis</keyword>
<dbReference type="EMBL" id="CP000440">
    <property type="protein sequence ID" value="ABI86576.1"/>
    <property type="molecule type" value="Genomic_DNA"/>
</dbReference>
<dbReference type="RefSeq" id="WP_006751871.1">
    <property type="nucleotide sequence ID" value="NZ_CP009798.1"/>
</dbReference>
<dbReference type="SMR" id="Q0BGZ7"/>
<dbReference type="GeneID" id="93083576"/>
<dbReference type="KEGG" id="bam:Bamb_1017"/>
<dbReference type="PATRIC" id="fig|339670.21.peg.555"/>
<dbReference type="eggNOG" id="COG0231">
    <property type="taxonomic scope" value="Bacteria"/>
</dbReference>
<dbReference type="UniPathway" id="UPA00345"/>
<dbReference type="Proteomes" id="UP000000662">
    <property type="component" value="Chromosome 1"/>
</dbReference>
<dbReference type="GO" id="GO:0005737">
    <property type="term" value="C:cytoplasm"/>
    <property type="evidence" value="ECO:0007669"/>
    <property type="project" value="UniProtKB-SubCell"/>
</dbReference>
<dbReference type="GO" id="GO:0003746">
    <property type="term" value="F:translation elongation factor activity"/>
    <property type="evidence" value="ECO:0007669"/>
    <property type="project" value="UniProtKB-UniRule"/>
</dbReference>
<dbReference type="GO" id="GO:0043043">
    <property type="term" value="P:peptide biosynthetic process"/>
    <property type="evidence" value="ECO:0007669"/>
    <property type="project" value="InterPro"/>
</dbReference>
<dbReference type="CDD" id="cd04470">
    <property type="entry name" value="S1_EF-P_repeat_1"/>
    <property type="match status" value="1"/>
</dbReference>
<dbReference type="CDD" id="cd05794">
    <property type="entry name" value="S1_EF-P_repeat_2"/>
    <property type="match status" value="1"/>
</dbReference>
<dbReference type="FunFam" id="2.30.30.30:FF:000003">
    <property type="entry name" value="Elongation factor P"/>
    <property type="match status" value="1"/>
</dbReference>
<dbReference type="FunFam" id="2.40.50.140:FF:000004">
    <property type="entry name" value="Elongation factor P"/>
    <property type="match status" value="1"/>
</dbReference>
<dbReference type="FunFam" id="2.40.50.140:FF:000009">
    <property type="entry name" value="Elongation factor P"/>
    <property type="match status" value="1"/>
</dbReference>
<dbReference type="Gene3D" id="2.30.30.30">
    <property type="match status" value="1"/>
</dbReference>
<dbReference type="Gene3D" id="2.40.50.140">
    <property type="entry name" value="Nucleic acid-binding proteins"/>
    <property type="match status" value="2"/>
</dbReference>
<dbReference type="HAMAP" id="MF_00141">
    <property type="entry name" value="EF_P"/>
    <property type="match status" value="1"/>
</dbReference>
<dbReference type="InterPro" id="IPR015365">
    <property type="entry name" value="Elong-fact-P_C"/>
</dbReference>
<dbReference type="InterPro" id="IPR012340">
    <property type="entry name" value="NA-bd_OB-fold"/>
</dbReference>
<dbReference type="InterPro" id="IPR014722">
    <property type="entry name" value="Rib_uL2_dom2"/>
</dbReference>
<dbReference type="InterPro" id="IPR020599">
    <property type="entry name" value="Transl_elong_fac_P/YeiP"/>
</dbReference>
<dbReference type="InterPro" id="IPR013185">
    <property type="entry name" value="Transl_elong_KOW-like"/>
</dbReference>
<dbReference type="InterPro" id="IPR001059">
    <property type="entry name" value="Transl_elong_P/YeiP_cen"/>
</dbReference>
<dbReference type="InterPro" id="IPR013852">
    <property type="entry name" value="Transl_elong_P/YeiP_CS"/>
</dbReference>
<dbReference type="InterPro" id="IPR011768">
    <property type="entry name" value="Transl_elongation_fac_P"/>
</dbReference>
<dbReference type="InterPro" id="IPR008991">
    <property type="entry name" value="Translation_prot_SH3-like_sf"/>
</dbReference>
<dbReference type="NCBIfam" id="TIGR00038">
    <property type="entry name" value="efp"/>
    <property type="match status" value="1"/>
</dbReference>
<dbReference type="NCBIfam" id="NF001810">
    <property type="entry name" value="PRK00529.1"/>
    <property type="match status" value="1"/>
</dbReference>
<dbReference type="PANTHER" id="PTHR30053">
    <property type="entry name" value="ELONGATION FACTOR P"/>
    <property type="match status" value="1"/>
</dbReference>
<dbReference type="PANTHER" id="PTHR30053:SF12">
    <property type="entry name" value="ELONGATION FACTOR P (EF-P) FAMILY PROTEIN"/>
    <property type="match status" value="1"/>
</dbReference>
<dbReference type="Pfam" id="PF01132">
    <property type="entry name" value="EFP"/>
    <property type="match status" value="1"/>
</dbReference>
<dbReference type="Pfam" id="PF08207">
    <property type="entry name" value="EFP_N"/>
    <property type="match status" value="1"/>
</dbReference>
<dbReference type="Pfam" id="PF09285">
    <property type="entry name" value="Elong-fact-P_C"/>
    <property type="match status" value="1"/>
</dbReference>
<dbReference type="PIRSF" id="PIRSF005901">
    <property type="entry name" value="EF-P"/>
    <property type="match status" value="1"/>
</dbReference>
<dbReference type="SMART" id="SM01185">
    <property type="entry name" value="EFP"/>
    <property type="match status" value="1"/>
</dbReference>
<dbReference type="SMART" id="SM00841">
    <property type="entry name" value="Elong-fact-P_C"/>
    <property type="match status" value="1"/>
</dbReference>
<dbReference type="SUPFAM" id="SSF50249">
    <property type="entry name" value="Nucleic acid-binding proteins"/>
    <property type="match status" value="2"/>
</dbReference>
<dbReference type="SUPFAM" id="SSF50104">
    <property type="entry name" value="Translation proteins SH3-like domain"/>
    <property type="match status" value="1"/>
</dbReference>
<dbReference type="PROSITE" id="PS01275">
    <property type="entry name" value="EFP"/>
    <property type="match status" value="1"/>
</dbReference>
<comment type="function">
    <text evidence="1">Involved in peptide bond synthesis. Stimulates efficient translation and peptide-bond synthesis on native or reconstituted 70S ribosomes in vitro. Probably functions indirectly by altering the affinity of the ribosome for aminoacyl-tRNA, thus increasing their reactivity as acceptors for peptidyl transferase.</text>
</comment>
<comment type="pathway">
    <text evidence="1">Protein biosynthesis; polypeptide chain elongation.</text>
</comment>
<comment type="subcellular location">
    <subcellularLocation>
        <location evidence="1">Cytoplasm</location>
    </subcellularLocation>
</comment>
<comment type="similarity">
    <text evidence="1">Belongs to the elongation factor P family.</text>
</comment>
<proteinExistence type="inferred from homology"/>
<evidence type="ECO:0000255" key="1">
    <source>
        <dbReference type="HAMAP-Rule" id="MF_00141"/>
    </source>
</evidence>
<name>EFP_BURCM</name>
<reference key="1">
    <citation type="submission" date="2006-08" db="EMBL/GenBank/DDBJ databases">
        <title>Complete sequence of chromosome 1 of Burkholderia cepacia AMMD.</title>
        <authorList>
            <person name="Copeland A."/>
            <person name="Lucas S."/>
            <person name="Lapidus A."/>
            <person name="Barry K."/>
            <person name="Detter J.C."/>
            <person name="Glavina del Rio T."/>
            <person name="Hammon N."/>
            <person name="Israni S."/>
            <person name="Pitluck S."/>
            <person name="Bruce D."/>
            <person name="Chain P."/>
            <person name="Malfatti S."/>
            <person name="Shin M."/>
            <person name="Vergez L."/>
            <person name="Schmutz J."/>
            <person name="Larimer F."/>
            <person name="Land M."/>
            <person name="Hauser L."/>
            <person name="Kyrpides N."/>
            <person name="Kim E."/>
            <person name="Parke J."/>
            <person name="Coenye T."/>
            <person name="Konstantinidis K."/>
            <person name="Ramette A."/>
            <person name="Tiedje J."/>
            <person name="Richardson P."/>
        </authorList>
    </citation>
    <scope>NUCLEOTIDE SEQUENCE [LARGE SCALE GENOMIC DNA]</scope>
    <source>
        <strain>ATCC BAA-244 / DSM 16087 / CCUG 44356 / LMG 19182 / AMMD</strain>
    </source>
</reference>
<accession>Q0BGZ7</accession>
<sequence>MKTAQELRVGNVVQIGSDAWVIAKTEYNKSGRNAAVVKMKMKNLLTNAGQESVYKADDKFDVVMLDRKEVTYSYFADPMYVFMDADYNQYEVEAEMMGEALNYLEDGMACEVVFYNEKAISVELPTILVREITYTEPAVKGDTSSGKVLKNAKLATGFELQVPLFCSTGDKIEIDTRTNEYRSRA</sequence>
<gene>
    <name evidence="1" type="primary">efp</name>
    <name type="ordered locus">Bamb_1017</name>
</gene>